<name>RS2_RICRS</name>
<sequence length="295" mass="32905">MSKIPSVNIKALLDAGVHFGHKTSRWNPKMASYIYGKRDDVHIIDLRQSVALMNVALNAIYETVKKDGKILFVSTKIQASDIIAEYAEKCGQYYVNHRWLGGMLTNWKTIAGSIEKLNKLDKTLENEEALMGYTKKEILDMSRKKDKLLLSLAGIRNLNSKPDLLVVIDTNKEHIAINEAVKLNVPIVAVVDTNSNPDNVDYPIPGNDDSIRSIRLYCSLFADAALQGLEESMKASGVDMGAMQEHTDKGLTSKNVSKLKQAKKFSKTKNIDEETNTEFEQVLNDADENKNSDNA</sequence>
<organism>
    <name type="scientific">Rickettsia rickettsii (strain Sheila Smith)</name>
    <dbReference type="NCBI Taxonomy" id="392021"/>
    <lineage>
        <taxon>Bacteria</taxon>
        <taxon>Pseudomonadati</taxon>
        <taxon>Pseudomonadota</taxon>
        <taxon>Alphaproteobacteria</taxon>
        <taxon>Rickettsiales</taxon>
        <taxon>Rickettsiaceae</taxon>
        <taxon>Rickettsieae</taxon>
        <taxon>Rickettsia</taxon>
        <taxon>spotted fever group</taxon>
    </lineage>
</organism>
<reference key="1">
    <citation type="submission" date="2007-09" db="EMBL/GenBank/DDBJ databases">
        <title>Complete genome sequence of Rickettsia rickettsii.</title>
        <authorList>
            <person name="Madan A."/>
            <person name="Fahey J."/>
            <person name="Helton E."/>
            <person name="Ketteman M."/>
            <person name="Madan A."/>
            <person name="Rodrigues S."/>
            <person name="Sanchez A."/>
            <person name="Dasch G."/>
            <person name="Eremeeva M."/>
        </authorList>
    </citation>
    <scope>NUCLEOTIDE SEQUENCE [LARGE SCALE GENOMIC DNA]</scope>
    <source>
        <strain>Sheila Smith</strain>
    </source>
</reference>
<comment type="similarity">
    <text evidence="1">Belongs to the universal ribosomal protein uS2 family.</text>
</comment>
<accession>A8GQP7</accession>
<dbReference type="EMBL" id="CP000848">
    <property type="protein sequence ID" value="ABV75722.1"/>
    <property type="molecule type" value="Genomic_DNA"/>
</dbReference>
<dbReference type="RefSeq" id="WP_012150337.1">
    <property type="nucleotide sequence ID" value="NZ_CP121767.1"/>
</dbReference>
<dbReference type="SMR" id="A8GQP7"/>
<dbReference type="GeneID" id="79936912"/>
<dbReference type="KEGG" id="rri:A1G_00680"/>
<dbReference type="HOGENOM" id="CLU_040318_2_1_5"/>
<dbReference type="Proteomes" id="UP000006832">
    <property type="component" value="Chromosome"/>
</dbReference>
<dbReference type="GO" id="GO:0022627">
    <property type="term" value="C:cytosolic small ribosomal subunit"/>
    <property type="evidence" value="ECO:0007669"/>
    <property type="project" value="TreeGrafter"/>
</dbReference>
<dbReference type="GO" id="GO:0003735">
    <property type="term" value="F:structural constituent of ribosome"/>
    <property type="evidence" value="ECO:0007669"/>
    <property type="project" value="InterPro"/>
</dbReference>
<dbReference type="GO" id="GO:0006412">
    <property type="term" value="P:translation"/>
    <property type="evidence" value="ECO:0007669"/>
    <property type="project" value="UniProtKB-UniRule"/>
</dbReference>
<dbReference type="CDD" id="cd01425">
    <property type="entry name" value="RPS2"/>
    <property type="match status" value="1"/>
</dbReference>
<dbReference type="Gene3D" id="3.40.50.10490">
    <property type="entry name" value="Glucose-6-phosphate isomerase like protein, domain 1"/>
    <property type="match status" value="1"/>
</dbReference>
<dbReference type="Gene3D" id="1.10.287.610">
    <property type="entry name" value="Helix hairpin bin"/>
    <property type="match status" value="1"/>
</dbReference>
<dbReference type="HAMAP" id="MF_00291_B">
    <property type="entry name" value="Ribosomal_uS2_B"/>
    <property type="match status" value="1"/>
</dbReference>
<dbReference type="InterPro" id="IPR001865">
    <property type="entry name" value="Ribosomal_uS2"/>
</dbReference>
<dbReference type="InterPro" id="IPR005706">
    <property type="entry name" value="Ribosomal_uS2_bac/mit/plastid"/>
</dbReference>
<dbReference type="InterPro" id="IPR018130">
    <property type="entry name" value="Ribosomal_uS2_CS"/>
</dbReference>
<dbReference type="InterPro" id="IPR023591">
    <property type="entry name" value="Ribosomal_uS2_flav_dom_sf"/>
</dbReference>
<dbReference type="NCBIfam" id="TIGR01011">
    <property type="entry name" value="rpsB_bact"/>
    <property type="match status" value="1"/>
</dbReference>
<dbReference type="PANTHER" id="PTHR12534">
    <property type="entry name" value="30S RIBOSOMAL PROTEIN S2 PROKARYOTIC AND ORGANELLAR"/>
    <property type="match status" value="1"/>
</dbReference>
<dbReference type="PANTHER" id="PTHR12534:SF0">
    <property type="entry name" value="SMALL RIBOSOMAL SUBUNIT PROTEIN US2M"/>
    <property type="match status" value="1"/>
</dbReference>
<dbReference type="Pfam" id="PF00318">
    <property type="entry name" value="Ribosomal_S2"/>
    <property type="match status" value="1"/>
</dbReference>
<dbReference type="PRINTS" id="PR00395">
    <property type="entry name" value="RIBOSOMALS2"/>
</dbReference>
<dbReference type="SUPFAM" id="SSF52313">
    <property type="entry name" value="Ribosomal protein S2"/>
    <property type="match status" value="1"/>
</dbReference>
<dbReference type="PROSITE" id="PS00962">
    <property type="entry name" value="RIBOSOMAL_S2_1"/>
    <property type="match status" value="1"/>
</dbReference>
<dbReference type="PROSITE" id="PS00963">
    <property type="entry name" value="RIBOSOMAL_S2_2"/>
    <property type="match status" value="1"/>
</dbReference>
<gene>
    <name evidence="1" type="primary">rpsB</name>
    <name type="ordered locus">A1G_00680</name>
</gene>
<protein>
    <recommendedName>
        <fullName evidence="1">Small ribosomal subunit protein uS2</fullName>
    </recommendedName>
    <alternativeName>
        <fullName evidence="3">30S ribosomal protein S2</fullName>
    </alternativeName>
</protein>
<proteinExistence type="inferred from homology"/>
<feature type="chain" id="PRO_1000004056" description="Small ribosomal subunit protein uS2">
    <location>
        <begin position="1"/>
        <end position="295"/>
    </location>
</feature>
<feature type="region of interest" description="Disordered" evidence="2">
    <location>
        <begin position="261"/>
        <end position="295"/>
    </location>
</feature>
<evidence type="ECO:0000255" key="1">
    <source>
        <dbReference type="HAMAP-Rule" id="MF_00291"/>
    </source>
</evidence>
<evidence type="ECO:0000256" key="2">
    <source>
        <dbReference type="SAM" id="MobiDB-lite"/>
    </source>
</evidence>
<evidence type="ECO:0000305" key="3"/>
<keyword id="KW-0687">Ribonucleoprotein</keyword>
<keyword id="KW-0689">Ribosomal protein</keyword>